<name>MSHC_SALAI</name>
<proteinExistence type="inferred from homology"/>
<gene>
    <name evidence="1" type="primary">mshC</name>
    <name type="ordered locus">Sare_2322</name>
</gene>
<evidence type="ECO:0000255" key="1">
    <source>
        <dbReference type="HAMAP-Rule" id="MF_01697"/>
    </source>
</evidence>
<reference key="1">
    <citation type="submission" date="2007-10" db="EMBL/GenBank/DDBJ databases">
        <title>Complete sequence of Salinispora arenicola CNS-205.</title>
        <authorList>
            <consortium name="US DOE Joint Genome Institute"/>
            <person name="Copeland A."/>
            <person name="Lucas S."/>
            <person name="Lapidus A."/>
            <person name="Barry K."/>
            <person name="Glavina del Rio T."/>
            <person name="Dalin E."/>
            <person name="Tice H."/>
            <person name="Pitluck S."/>
            <person name="Foster B."/>
            <person name="Schmutz J."/>
            <person name="Larimer F."/>
            <person name="Land M."/>
            <person name="Hauser L."/>
            <person name="Kyrpides N."/>
            <person name="Ivanova N."/>
            <person name="Jensen P.R."/>
            <person name="Moore B.S."/>
            <person name="Penn K."/>
            <person name="Jenkins C."/>
            <person name="Udwary D."/>
            <person name="Xiang L."/>
            <person name="Gontang E."/>
            <person name="Richardson P."/>
        </authorList>
    </citation>
    <scope>NUCLEOTIDE SEQUENCE [LARGE SCALE GENOMIC DNA]</scope>
    <source>
        <strain>CNS-205</strain>
    </source>
</reference>
<accession>A8M264</accession>
<protein>
    <recommendedName>
        <fullName evidence="1">L-cysteine:1D-myo-inositol 2-amino-2-deoxy-alpha-D-glucopyranoside ligase</fullName>
        <shortName evidence="1">L-Cys:GlcN-Ins ligase</shortName>
        <ecNumber evidence="1">6.3.1.13</ecNumber>
    </recommendedName>
    <alternativeName>
        <fullName evidence="1">Mycothiol ligase</fullName>
        <shortName evidence="1">MSH ligase</shortName>
    </alternativeName>
</protein>
<feature type="chain" id="PRO_0000400481" description="L-cysteine:1D-myo-inositol 2-amino-2-deoxy-alpha-D-glucopyranoside ligase">
    <location>
        <begin position="1"/>
        <end position="412"/>
    </location>
</feature>
<feature type="short sequence motif" description="'HIGH' region" evidence="1">
    <location>
        <begin position="45"/>
        <end position="55"/>
    </location>
</feature>
<feature type="short sequence motif" description="'ERGGDP' region" evidence="1">
    <location>
        <begin position="186"/>
        <end position="191"/>
    </location>
</feature>
<feature type="short sequence motif" description="'KMSKS' region" evidence="1">
    <location>
        <begin position="289"/>
        <end position="293"/>
    </location>
</feature>
<feature type="binding site" evidence="1">
    <location>
        <begin position="43"/>
        <end position="46"/>
    </location>
    <ligand>
        <name>L-cysteinyl-5'-AMP</name>
        <dbReference type="ChEBI" id="CHEBI:144924"/>
    </ligand>
</feature>
<feature type="binding site" evidence="1">
    <location>
        <position position="43"/>
    </location>
    <ligand>
        <name>Zn(2+)</name>
        <dbReference type="ChEBI" id="CHEBI:29105"/>
    </ligand>
</feature>
<feature type="binding site" evidence="1">
    <location>
        <position position="58"/>
    </location>
    <ligand>
        <name>L-cysteinyl-5'-AMP</name>
        <dbReference type="ChEBI" id="CHEBI:144924"/>
    </ligand>
</feature>
<feature type="binding site" evidence="1">
    <location>
        <begin position="81"/>
        <end position="83"/>
    </location>
    <ligand>
        <name>L-cysteinyl-5'-AMP</name>
        <dbReference type="ChEBI" id="CHEBI:144924"/>
    </ligand>
</feature>
<feature type="binding site" evidence="1">
    <location>
        <position position="227"/>
    </location>
    <ligand>
        <name>L-cysteinyl-5'-AMP</name>
        <dbReference type="ChEBI" id="CHEBI:144924"/>
    </ligand>
</feature>
<feature type="binding site" evidence="1">
    <location>
        <position position="231"/>
    </location>
    <ligand>
        <name>Zn(2+)</name>
        <dbReference type="ChEBI" id="CHEBI:29105"/>
    </ligand>
</feature>
<feature type="binding site" evidence="1">
    <location>
        <begin position="249"/>
        <end position="251"/>
    </location>
    <ligand>
        <name>L-cysteinyl-5'-AMP</name>
        <dbReference type="ChEBI" id="CHEBI:144924"/>
    </ligand>
</feature>
<feature type="binding site" evidence="1">
    <location>
        <position position="256"/>
    </location>
    <ligand>
        <name>Zn(2+)</name>
        <dbReference type="ChEBI" id="CHEBI:29105"/>
    </ligand>
</feature>
<feature type="binding site" evidence="1">
    <location>
        <position position="283"/>
    </location>
    <ligand>
        <name>L-cysteinyl-5'-AMP</name>
        <dbReference type="ChEBI" id="CHEBI:144924"/>
    </ligand>
</feature>
<sequence>MDSWAGHEVPRLPGRGGPLMLFDSARQGVAASTPTGTGTMYVCGITPYDATHLGHAATMITFDLVQRVWRDAGLDVTYVQNVTDIDDPLLERAARDGEDWKVLAMRETALFREDMVALRIIPPAHYVGAVESIPDIAERVLTLVKEEAAYRIDDGTGDVYFDISAAPRFGYESNLGREQMLKIFPERGGDPDRAGKRDPLDPLLWRSARADEPSWPGGGLGPGRPGWHIECAVIALNLLGHRIDVQGGGNDLIFPHHECSAAHAELLTGQSPFAQHYVHAGMIGLAGEKMSKSRGNLVFVSRLRADRVDPMAVRLALMSGHYRSDRSWNDDLLVTAQKRLDRWRRAAAAPSGPSARTFLAAFRERLADDLDSPGALTLADSWADAALVGTGDDQAAPALFARAVDALLGVRL</sequence>
<keyword id="KW-0067">ATP-binding</keyword>
<keyword id="KW-0436">Ligase</keyword>
<keyword id="KW-0479">Metal-binding</keyword>
<keyword id="KW-0547">Nucleotide-binding</keyword>
<keyword id="KW-0862">Zinc</keyword>
<comment type="function">
    <text evidence="1">Catalyzes the ATP-dependent condensation of GlcN-Ins and L-cysteine to form L-Cys-GlcN-Ins.</text>
</comment>
<comment type="catalytic activity">
    <reaction evidence="1">
        <text>1D-myo-inositol 2-amino-2-deoxy-alpha-D-glucopyranoside + L-cysteine + ATP = 1D-myo-inositol 2-(L-cysteinylamino)-2-deoxy-alpha-D-glucopyranoside + AMP + diphosphate + H(+)</text>
        <dbReference type="Rhea" id="RHEA:26176"/>
        <dbReference type="ChEBI" id="CHEBI:15378"/>
        <dbReference type="ChEBI" id="CHEBI:30616"/>
        <dbReference type="ChEBI" id="CHEBI:33019"/>
        <dbReference type="ChEBI" id="CHEBI:35235"/>
        <dbReference type="ChEBI" id="CHEBI:58886"/>
        <dbReference type="ChEBI" id="CHEBI:58887"/>
        <dbReference type="ChEBI" id="CHEBI:456215"/>
        <dbReference type="EC" id="6.3.1.13"/>
    </reaction>
</comment>
<comment type="cofactor">
    <cofactor evidence="1">
        <name>Zn(2+)</name>
        <dbReference type="ChEBI" id="CHEBI:29105"/>
    </cofactor>
    <text evidence="1">Binds 1 zinc ion per subunit.</text>
</comment>
<comment type="subunit">
    <text evidence="1">Monomer.</text>
</comment>
<comment type="similarity">
    <text evidence="1">Belongs to the class-I aminoacyl-tRNA synthetase family. MshC subfamily.</text>
</comment>
<organism>
    <name type="scientific">Salinispora arenicola (strain CNS-205)</name>
    <dbReference type="NCBI Taxonomy" id="391037"/>
    <lineage>
        <taxon>Bacteria</taxon>
        <taxon>Bacillati</taxon>
        <taxon>Actinomycetota</taxon>
        <taxon>Actinomycetes</taxon>
        <taxon>Micromonosporales</taxon>
        <taxon>Micromonosporaceae</taxon>
        <taxon>Salinispora</taxon>
    </lineage>
</organism>
<dbReference type="EC" id="6.3.1.13" evidence="1"/>
<dbReference type="EMBL" id="CP000850">
    <property type="protein sequence ID" value="ABV98180.1"/>
    <property type="molecule type" value="Genomic_DNA"/>
</dbReference>
<dbReference type="SMR" id="A8M264"/>
<dbReference type="STRING" id="391037.Sare_2322"/>
<dbReference type="KEGG" id="saq:Sare_2322"/>
<dbReference type="PATRIC" id="fig|391037.6.peg.2355"/>
<dbReference type="eggNOG" id="COG0215">
    <property type="taxonomic scope" value="Bacteria"/>
</dbReference>
<dbReference type="HOGENOM" id="CLU_013528_0_0_11"/>
<dbReference type="OrthoDB" id="9815130at2"/>
<dbReference type="GO" id="GO:0005829">
    <property type="term" value="C:cytosol"/>
    <property type="evidence" value="ECO:0007669"/>
    <property type="project" value="TreeGrafter"/>
</dbReference>
<dbReference type="GO" id="GO:0005524">
    <property type="term" value="F:ATP binding"/>
    <property type="evidence" value="ECO:0007669"/>
    <property type="project" value="UniProtKB-KW"/>
</dbReference>
<dbReference type="GO" id="GO:0035446">
    <property type="term" value="F:cysteine-glucosaminylinositol ligase activity"/>
    <property type="evidence" value="ECO:0007669"/>
    <property type="project" value="UniProtKB-UniRule"/>
</dbReference>
<dbReference type="GO" id="GO:0004817">
    <property type="term" value="F:cysteine-tRNA ligase activity"/>
    <property type="evidence" value="ECO:0007669"/>
    <property type="project" value="TreeGrafter"/>
</dbReference>
<dbReference type="GO" id="GO:0008270">
    <property type="term" value="F:zinc ion binding"/>
    <property type="evidence" value="ECO:0007669"/>
    <property type="project" value="UniProtKB-UniRule"/>
</dbReference>
<dbReference type="GO" id="GO:0006423">
    <property type="term" value="P:cysteinyl-tRNA aminoacylation"/>
    <property type="evidence" value="ECO:0007669"/>
    <property type="project" value="TreeGrafter"/>
</dbReference>
<dbReference type="GO" id="GO:0010125">
    <property type="term" value="P:mycothiol biosynthetic process"/>
    <property type="evidence" value="ECO:0007669"/>
    <property type="project" value="UniProtKB-UniRule"/>
</dbReference>
<dbReference type="FunFam" id="3.40.50.620:FF:000134">
    <property type="entry name" value="L-cysteine:1D-myo-inositol 2-amino-2-deoxy-alpha-D-glucopyranoside ligase"/>
    <property type="match status" value="1"/>
</dbReference>
<dbReference type="Gene3D" id="1.20.120.640">
    <property type="entry name" value="Anticodon-binding domain of a subclass of class I aminoacyl-tRNA synthetases"/>
    <property type="match status" value="1"/>
</dbReference>
<dbReference type="Gene3D" id="3.40.50.620">
    <property type="entry name" value="HUPs"/>
    <property type="match status" value="1"/>
</dbReference>
<dbReference type="HAMAP" id="MF_01697">
    <property type="entry name" value="MshC"/>
    <property type="match status" value="1"/>
</dbReference>
<dbReference type="InterPro" id="IPR024909">
    <property type="entry name" value="Cys-tRNA/MSH_ligase"/>
</dbReference>
<dbReference type="InterPro" id="IPR017812">
    <property type="entry name" value="Mycothiol_ligase_MshC"/>
</dbReference>
<dbReference type="InterPro" id="IPR014729">
    <property type="entry name" value="Rossmann-like_a/b/a_fold"/>
</dbReference>
<dbReference type="InterPro" id="IPR032678">
    <property type="entry name" value="tRNA-synt_1_cat_dom"/>
</dbReference>
<dbReference type="NCBIfam" id="TIGR03447">
    <property type="entry name" value="mycothiol_MshC"/>
    <property type="match status" value="1"/>
</dbReference>
<dbReference type="PANTHER" id="PTHR10890:SF3">
    <property type="entry name" value="CYSTEINE--TRNA LIGASE, CYTOPLASMIC"/>
    <property type="match status" value="1"/>
</dbReference>
<dbReference type="PANTHER" id="PTHR10890">
    <property type="entry name" value="CYSTEINYL-TRNA SYNTHETASE"/>
    <property type="match status" value="1"/>
</dbReference>
<dbReference type="Pfam" id="PF01406">
    <property type="entry name" value="tRNA-synt_1e"/>
    <property type="match status" value="1"/>
</dbReference>
<dbReference type="PRINTS" id="PR00983">
    <property type="entry name" value="TRNASYNTHCYS"/>
</dbReference>
<dbReference type="SUPFAM" id="SSF52374">
    <property type="entry name" value="Nucleotidylyl transferase"/>
    <property type="match status" value="1"/>
</dbReference>